<dbReference type="EC" id="2.7.1.237" evidence="1"/>
<dbReference type="EMBL" id="BX950229">
    <property type="protein sequence ID" value="CAF29998.1"/>
    <property type="molecule type" value="Genomic_DNA"/>
</dbReference>
<dbReference type="RefSeq" id="WP_011170386.1">
    <property type="nucleotide sequence ID" value="NC_005791.1"/>
</dbReference>
<dbReference type="SMR" id="Q6M030"/>
<dbReference type="STRING" id="267377.MMP0442"/>
<dbReference type="EnsemblBacteria" id="CAF29998">
    <property type="protein sequence ID" value="CAF29998"/>
    <property type="gene ID" value="MMP0442"/>
</dbReference>
<dbReference type="KEGG" id="mmp:MMP0442"/>
<dbReference type="PATRIC" id="fig|267377.15.peg.446"/>
<dbReference type="eggNOG" id="arCOG04076">
    <property type="taxonomic scope" value="Archaea"/>
</dbReference>
<dbReference type="HOGENOM" id="CLU_120795_1_0_2"/>
<dbReference type="OrthoDB" id="15447at2157"/>
<dbReference type="UniPathway" id="UPA00241"/>
<dbReference type="Proteomes" id="UP000000590">
    <property type="component" value="Chromosome"/>
</dbReference>
<dbReference type="GO" id="GO:0005525">
    <property type="term" value="F:GTP binding"/>
    <property type="evidence" value="ECO:0007669"/>
    <property type="project" value="UniProtKB-UniRule"/>
</dbReference>
<dbReference type="GO" id="GO:0016301">
    <property type="term" value="F:kinase activity"/>
    <property type="evidence" value="ECO:0007669"/>
    <property type="project" value="UniProtKB-UniRule"/>
</dbReference>
<dbReference type="GO" id="GO:0015937">
    <property type="term" value="P:coenzyme A biosynthetic process"/>
    <property type="evidence" value="ECO:0007669"/>
    <property type="project" value="UniProtKB-UniRule"/>
</dbReference>
<dbReference type="HAMAP" id="MF_00590">
    <property type="entry name" value="Dephospho_CoA_kinase_GTP_dep"/>
    <property type="match status" value="1"/>
</dbReference>
<dbReference type="InterPro" id="IPR007164">
    <property type="entry name" value="GTP-dep_dephospho-CoA_kin"/>
</dbReference>
<dbReference type="PANTHER" id="PTHR40732:SF1">
    <property type="entry name" value="GTP-DEPENDENT DEPHOSPHO-COA KINASE"/>
    <property type="match status" value="1"/>
</dbReference>
<dbReference type="PANTHER" id="PTHR40732">
    <property type="entry name" value="UPF0218 PROTEIN TK1697"/>
    <property type="match status" value="1"/>
</dbReference>
<dbReference type="Pfam" id="PF04019">
    <property type="entry name" value="DUF359"/>
    <property type="match status" value="1"/>
</dbReference>
<dbReference type="PIRSF" id="PIRSF006533">
    <property type="entry name" value="UCP006533"/>
    <property type="match status" value="1"/>
</dbReference>
<sequence length="158" mass="18121">MYLLNDKVAHELKKPFGKVYKELPSIEGKVVSIGDVTTKHLLSNGIIPDLSILDFKTKRNIPVDIPHKFKTIFEVENPQGCISDEAIERIKYLSTIHDRDMALIIKGEEDLLTIPVIKYFPEDTSVIYGQPDEGMVLLKITDELKQKIEKLLKEMEER</sequence>
<name>DPCKG_METMP</name>
<organism>
    <name type="scientific">Methanococcus maripaludis (strain DSM 14266 / JCM 13030 / NBRC 101832 / S2 / LL)</name>
    <dbReference type="NCBI Taxonomy" id="267377"/>
    <lineage>
        <taxon>Archaea</taxon>
        <taxon>Methanobacteriati</taxon>
        <taxon>Methanobacteriota</taxon>
        <taxon>Methanomada group</taxon>
        <taxon>Methanococci</taxon>
        <taxon>Methanococcales</taxon>
        <taxon>Methanococcaceae</taxon>
        <taxon>Methanococcus</taxon>
    </lineage>
</organism>
<reference key="1">
    <citation type="journal article" date="2004" name="J. Bacteriol.">
        <title>Complete genome sequence of the genetically tractable hydrogenotrophic methanogen Methanococcus maripaludis.</title>
        <authorList>
            <person name="Hendrickson E.L."/>
            <person name="Kaul R."/>
            <person name="Zhou Y."/>
            <person name="Bovee D."/>
            <person name="Chapman P."/>
            <person name="Chung J."/>
            <person name="Conway de Macario E."/>
            <person name="Dodsworth J.A."/>
            <person name="Gillett W."/>
            <person name="Graham D.E."/>
            <person name="Hackett M."/>
            <person name="Haydock A.K."/>
            <person name="Kang A."/>
            <person name="Land M.L."/>
            <person name="Levy R."/>
            <person name="Lie T.J."/>
            <person name="Major T.A."/>
            <person name="Moore B.C."/>
            <person name="Porat I."/>
            <person name="Palmeiri A."/>
            <person name="Rouse G."/>
            <person name="Saenphimmachak C."/>
            <person name="Soell D."/>
            <person name="Van Dien S."/>
            <person name="Wang T."/>
            <person name="Whitman W.B."/>
            <person name="Xia Q."/>
            <person name="Zhang Y."/>
            <person name="Larimer F.W."/>
            <person name="Olson M.V."/>
            <person name="Leigh J.A."/>
        </authorList>
    </citation>
    <scope>NUCLEOTIDE SEQUENCE [LARGE SCALE GENOMIC DNA]</scope>
    <source>
        <strain>DSM 14266 / JCM 13030 / NBRC 101832 / S2 / LL</strain>
    </source>
</reference>
<proteinExistence type="inferred from homology"/>
<evidence type="ECO:0000255" key="1">
    <source>
        <dbReference type="HAMAP-Rule" id="MF_00590"/>
    </source>
</evidence>
<comment type="function">
    <text evidence="1">Catalyzes the GTP-dependent phosphorylation of the 3'-hydroxyl group of dephosphocoenzyme A to form coenzyme A (CoA).</text>
</comment>
<comment type="catalytic activity">
    <reaction evidence="1">
        <text>3'-dephospho-CoA + GTP = GDP + CoA + H(+)</text>
        <dbReference type="Rhea" id="RHEA:61156"/>
        <dbReference type="ChEBI" id="CHEBI:15378"/>
        <dbReference type="ChEBI" id="CHEBI:37565"/>
        <dbReference type="ChEBI" id="CHEBI:57287"/>
        <dbReference type="ChEBI" id="CHEBI:57328"/>
        <dbReference type="ChEBI" id="CHEBI:58189"/>
        <dbReference type="EC" id="2.7.1.237"/>
    </reaction>
</comment>
<comment type="pathway">
    <text evidence="1">Cofactor biosynthesis; coenzyme A biosynthesis.</text>
</comment>
<comment type="similarity">
    <text evidence="1">Belongs to the GTP-dependent DPCK family.</text>
</comment>
<protein>
    <recommendedName>
        <fullName evidence="1">GTP-dependent dephospho-CoA kinase</fullName>
        <ecNumber evidence="1">2.7.1.237</ecNumber>
    </recommendedName>
    <alternativeName>
        <fullName evidence="1">Dephospho-coenzyme A kinase</fullName>
        <shortName evidence="1">DPCK</shortName>
    </alternativeName>
</protein>
<feature type="chain" id="PRO_1000025492" description="GTP-dependent dephospho-CoA kinase">
    <location>
        <begin position="1"/>
        <end position="158"/>
    </location>
</feature>
<feature type="binding site" evidence="1">
    <location>
        <position position="35"/>
    </location>
    <ligand>
        <name>GTP</name>
        <dbReference type="ChEBI" id="CHEBI:37565"/>
    </ligand>
</feature>
<feature type="binding site" evidence="1">
    <location>
        <position position="36"/>
    </location>
    <ligand>
        <name>GTP</name>
        <dbReference type="ChEBI" id="CHEBI:37565"/>
    </ligand>
</feature>
<feature type="binding site" evidence="1">
    <location>
        <position position="54"/>
    </location>
    <ligand>
        <name>GTP</name>
        <dbReference type="ChEBI" id="CHEBI:37565"/>
    </ligand>
</feature>
<feature type="binding site" evidence="1">
    <location>
        <position position="56"/>
    </location>
    <ligand>
        <name>GTP</name>
        <dbReference type="ChEBI" id="CHEBI:37565"/>
    </ligand>
</feature>
<feature type="binding site" evidence="1">
    <location>
        <position position="109"/>
    </location>
    <ligand>
        <name>GTP</name>
        <dbReference type="ChEBI" id="CHEBI:37565"/>
    </ligand>
</feature>
<feature type="binding site" evidence="1">
    <location>
        <position position="132"/>
    </location>
    <ligand>
        <name>GTP</name>
        <dbReference type="ChEBI" id="CHEBI:37565"/>
    </ligand>
</feature>
<gene>
    <name type="ordered locus">MMP0442</name>
</gene>
<keyword id="KW-0173">Coenzyme A biosynthesis</keyword>
<keyword id="KW-0342">GTP-binding</keyword>
<keyword id="KW-0418">Kinase</keyword>
<keyword id="KW-0547">Nucleotide-binding</keyword>
<keyword id="KW-1185">Reference proteome</keyword>
<keyword id="KW-0808">Transferase</keyword>
<accession>Q6M030</accession>